<keyword id="KW-0217">Developmental protein</keyword>
<keyword id="KW-0238">DNA-binding</keyword>
<keyword id="KW-0371">Homeobox</keyword>
<keyword id="KW-0539">Nucleus</keyword>
<keyword id="KW-1185">Reference proteome</keyword>
<keyword id="KW-0804">Transcription</keyword>
<keyword id="KW-0805">Transcription regulation</keyword>
<gene>
    <name type="primary">hoxa1</name>
</gene>
<protein>
    <recommendedName>
        <fullName>Homeobox protein Hox-A1</fullName>
    </recommendedName>
    <alternativeName>
        <fullName>Hox.lab2</fullName>
    </alternativeName>
</protein>
<dbReference type="EMBL" id="X62053">
    <property type="protein sequence ID" value="CAA43981.1"/>
    <property type="molecule type" value="mRNA"/>
</dbReference>
<dbReference type="EMBL" id="L25856">
    <property type="protein sequence ID" value="AAA03479.1"/>
    <property type="molecule type" value="mRNA"/>
</dbReference>
<dbReference type="PIR" id="B40357">
    <property type="entry name" value="B40357"/>
</dbReference>
<dbReference type="SMR" id="Q08821"/>
<dbReference type="AGR" id="Xenbase:XB-GENE-6252179"/>
<dbReference type="Xenbase" id="XB-GENE-6252179">
    <property type="gene designation" value="hoxa1.S"/>
</dbReference>
<dbReference type="Proteomes" id="UP000186698">
    <property type="component" value="Unplaced"/>
</dbReference>
<dbReference type="GO" id="GO:0005634">
    <property type="term" value="C:nucleus"/>
    <property type="evidence" value="ECO:0000318"/>
    <property type="project" value="GO_Central"/>
</dbReference>
<dbReference type="GO" id="GO:0000981">
    <property type="term" value="F:DNA-binding transcription factor activity, RNA polymerase II-specific"/>
    <property type="evidence" value="ECO:0000318"/>
    <property type="project" value="GO_Central"/>
</dbReference>
<dbReference type="GO" id="GO:0000978">
    <property type="term" value="F:RNA polymerase II cis-regulatory region sequence-specific DNA binding"/>
    <property type="evidence" value="ECO:0000318"/>
    <property type="project" value="GO_Central"/>
</dbReference>
<dbReference type="GO" id="GO:0006357">
    <property type="term" value="P:regulation of transcription by RNA polymerase II"/>
    <property type="evidence" value="ECO:0000318"/>
    <property type="project" value="GO_Central"/>
</dbReference>
<dbReference type="CDD" id="cd00086">
    <property type="entry name" value="homeodomain"/>
    <property type="match status" value="1"/>
</dbReference>
<dbReference type="FunFam" id="1.10.10.60:FF:000113">
    <property type="entry name" value="homeobox protein Hox-B1"/>
    <property type="match status" value="1"/>
</dbReference>
<dbReference type="Gene3D" id="1.10.10.60">
    <property type="entry name" value="Homeodomain-like"/>
    <property type="match status" value="1"/>
</dbReference>
<dbReference type="InterPro" id="IPR001356">
    <property type="entry name" value="HD"/>
</dbReference>
<dbReference type="InterPro" id="IPR020479">
    <property type="entry name" value="HD_metazoa"/>
</dbReference>
<dbReference type="InterPro" id="IPR017970">
    <property type="entry name" value="Homeobox_CS"/>
</dbReference>
<dbReference type="InterPro" id="IPR009057">
    <property type="entry name" value="Homeodomain-like_sf"/>
</dbReference>
<dbReference type="InterPro" id="IPR046327">
    <property type="entry name" value="HXA1/B1/D1"/>
</dbReference>
<dbReference type="PANTHER" id="PTHR45946:SF3">
    <property type="entry name" value="HOMEOBOX PROTEIN HOX-A1"/>
    <property type="match status" value="1"/>
</dbReference>
<dbReference type="PANTHER" id="PTHR45946">
    <property type="entry name" value="HOMEOBOX PROTEIN ROUGH-RELATED"/>
    <property type="match status" value="1"/>
</dbReference>
<dbReference type="Pfam" id="PF00046">
    <property type="entry name" value="Homeodomain"/>
    <property type="match status" value="1"/>
</dbReference>
<dbReference type="PRINTS" id="PR00024">
    <property type="entry name" value="HOMEOBOX"/>
</dbReference>
<dbReference type="SMART" id="SM00389">
    <property type="entry name" value="HOX"/>
    <property type="match status" value="1"/>
</dbReference>
<dbReference type="SUPFAM" id="SSF46689">
    <property type="entry name" value="Homeodomain-like"/>
    <property type="match status" value="1"/>
</dbReference>
<dbReference type="PROSITE" id="PS00027">
    <property type="entry name" value="HOMEOBOX_1"/>
    <property type="match status" value="1"/>
</dbReference>
<dbReference type="PROSITE" id="PS50071">
    <property type="entry name" value="HOMEOBOX_2"/>
    <property type="match status" value="1"/>
</dbReference>
<feature type="chain" id="PRO_0000200035" description="Homeobox protein Hox-A1">
    <location>
        <begin position="1" status="less than"/>
        <end position="240"/>
    </location>
</feature>
<feature type="DNA-binding region" description="Homeobox" evidence="3">
    <location>
        <begin position="134"/>
        <end position="193"/>
    </location>
</feature>
<feature type="region of interest" description="Disordered" evidence="4">
    <location>
        <begin position="186"/>
        <end position="240"/>
    </location>
</feature>
<feature type="short sequence motif" description="Antp-type hexapeptide">
    <location>
        <begin position="109"/>
        <end position="114"/>
    </location>
</feature>
<feature type="compositionally biased region" description="Basic and acidic residues" evidence="4">
    <location>
        <begin position="208"/>
        <end position="217"/>
    </location>
</feature>
<feature type="compositionally biased region" description="Low complexity" evidence="4">
    <location>
        <begin position="218"/>
        <end position="233"/>
    </location>
</feature>
<feature type="non-terminal residue">
    <location>
        <position position="1"/>
    </location>
</feature>
<organism>
    <name type="scientific">Xenopus laevis</name>
    <name type="common">African clawed frog</name>
    <dbReference type="NCBI Taxonomy" id="8355"/>
    <lineage>
        <taxon>Eukaryota</taxon>
        <taxon>Metazoa</taxon>
        <taxon>Chordata</taxon>
        <taxon>Craniata</taxon>
        <taxon>Vertebrata</taxon>
        <taxon>Euteleostomi</taxon>
        <taxon>Amphibia</taxon>
        <taxon>Batrachia</taxon>
        <taxon>Anura</taxon>
        <taxon>Pipoidea</taxon>
        <taxon>Pipidae</taxon>
        <taxon>Xenopodinae</taxon>
        <taxon>Xenopus</taxon>
        <taxon>Xenopus</taxon>
    </lineage>
</organism>
<proteinExistence type="evidence at transcript level"/>
<sequence>AYAHSSCGSNYGMQNFSPGYSHFPIHQETEVSSGFPQSVYSGNIASSVVQHQQHQSYIEGSAHYIHHSYGPEQNLSVANYNNNVASLHISQREVCHSPSSETSPGPTQTFDWMKVKRNPPKTGKAGEYGYAGQPNTARTNFTTKQLTELEKEFHFNKYLTRARRVEIAAALQLNETQVKIWFQNRRMKQKKREKEGLLPISPSTSTGSDEKSEELSEKSNSSPCAPSPASSTSDHLSASG</sequence>
<comment type="function">
    <text evidence="2">Sequence-specific transcription factor. Part of a developmental regulatory system that provides cells with specific positional identities on the anterior-posterior axis. Acts on the anterior body structures. Seems to act in the maintenance and/or generation of hindbrain segments.</text>
</comment>
<comment type="subcellular location">
    <subcellularLocation>
        <location evidence="1">Nucleus</location>
    </subcellularLocation>
</comment>
<comment type="similarity">
    <text evidence="5">Belongs to the Antp homeobox family. Labial subfamily.</text>
</comment>
<name>HXA1_XENLA</name>
<evidence type="ECO:0000250" key="1">
    <source>
        <dbReference type="UniProtKB" id="P09022"/>
    </source>
</evidence>
<evidence type="ECO:0000250" key="2">
    <source>
        <dbReference type="UniProtKB" id="Q90423"/>
    </source>
</evidence>
<evidence type="ECO:0000255" key="3">
    <source>
        <dbReference type="PROSITE-ProRule" id="PRU00108"/>
    </source>
</evidence>
<evidence type="ECO:0000256" key="4">
    <source>
        <dbReference type="SAM" id="MobiDB-lite"/>
    </source>
</evidence>
<evidence type="ECO:0000305" key="5"/>
<reference key="1">
    <citation type="journal article" date="1991" name="Genes Dev.">
        <title>Retinoic acid perturbs the expression of Xhox.lab genes and alters mesodermal determination in Xenopus laevis.</title>
        <authorList>
            <person name="Sive H.L."/>
            <person name="Cheng P.F."/>
        </authorList>
    </citation>
    <scope>NUCLEOTIDE SEQUENCE [MRNA]</scope>
</reference>
<accession>Q08821</accession>